<reference key="1">
    <citation type="journal article" date="2003" name="J. Bacteriol.">
        <title>Comparative analyses of the complete genome sequences of Pierce's disease and citrus variegated chlorosis strains of Xylella fastidiosa.</title>
        <authorList>
            <person name="Van Sluys M.A."/>
            <person name="de Oliveira M.C."/>
            <person name="Monteiro-Vitorello C.B."/>
            <person name="Miyaki C.Y."/>
            <person name="Furlan L.R."/>
            <person name="Camargo L.E.A."/>
            <person name="da Silva A.C.R."/>
            <person name="Moon D.H."/>
            <person name="Takita M.A."/>
            <person name="Lemos E.G.M."/>
            <person name="Machado M.A."/>
            <person name="Ferro M.I.T."/>
            <person name="da Silva F.R."/>
            <person name="Goldman M.H.S."/>
            <person name="Goldman G.H."/>
            <person name="Lemos M.V.F."/>
            <person name="El-Dorry H."/>
            <person name="Tsai S.M."/>
            <person name="Carrer H."/>
            <person name="Carraro D.M."/>
            <person name="de Oliveira R.C."/>
            <person name="Nunes L.R."/>
            <person name="Siqueira W.J."/>
            <person name="Coutinho L.L."/>
            <person name="Kimura E.T."/>
            <person name="Ferro E.S."/>
            <person name="Harakava R."/>
            <person name="Kuramae E.E."/>
            <person name="Marino C.L."/>
            <person name="Giglioti E."/>
            <person name="Abreu I.L."/>
            <person name="Alves L.M.C."/>
            <person name="do Amaral A.M."/>
            <person name="Baia G.S."/>
            <person name="Blanco S.R."/>
            <person name="Brito M.S."/>
            <person name="Cannavan F.S."/>
            <person name="Celestino A.V."/>
            <person name="da Cunha A.F."/>
            <person name="Fenille R.C."/>
            <person name="Ferro J.A."/>
            <person name="Formighieri E.F."/>
            <person name="Kishi L.T."/>
            <person name="Leoni S.G."/>
            <person name="Oliveira A.R."/>
            <person name="Rosa V.E. Jr."/>
            <person name="Sassaki F.T."/>
            <person name="Sena J.A.D."/>
            <person name="de Souza A.A."/>
            <person name="Truffi D."/>
            <person name="Tsukumo F."/>
            <person name="Yanai G.M."/>
            <person name="Zaros L.G."/>
            <person name="Civerolo E.L."/>
            <person name="Simpson A.J.G."/>
            <person name="Almeida N.F. Jr."/>
            <person name="Setubal J.C."/>
            <person name="Kitajima J.P."/>
        </authorList>
    </citation>
    <scope>NUCLEOTIDE SEQUENCE [LARGE SCALE GENOMIC DNA]</scope>
    <source>
        <strain>Temecula1 / ATCC 700964</strain>
    </source>
</reference>
<accession>Q87F21</accession>
<sequence>MHINNWPTHERPREKLLAHGAATLSDAELLAIFLGSGLRGHDAVQTARNLLHTHGPLRELLDRPPGDLMRLPGLGLARACKLTAALELSTRHLAAALQRGASIHDPISAGRYFAQRLRANPNEVFAVLFLDNRHRAISFEELFHGTINGAEVHPREVVRRALTLNAAAVIVGHNHPSGNREPSPADQMITQRLKNALDLIDVRLVDHFVIGDGAPVSFAEHGWL</sequence>
<protein>
    <recommendedName>
        <fullName>UPF0758 protein PD_0117</fullName>
    </recommendedName>
</protein>
<keyword id="KW-0378">Hydrolase</keyword>
<keyword id="KW-0479">Metal-binding</keyword>
<keyword id="KW-0482">Metalloprotease</keyword>
<keyword id="KW-0645">Protease</keyword>
<keyword id="KW-1185">Reference proteome</keyword>
<keyword id="KW-0862">Zinc</keyword>
<dbReference type="EMBL" id="AE009442">
    <property type="protein sequence ID" value="AAO28016.1"/>
    <property type="molecule type" value="Genomic_DNA"/>
</dbReference>
<dbReference type="SMR" id="Q87F21"/>
<dbReference type="KEGG" id="xft:PD_0117"/>
<dbReference type="HOGENOM" id="CLU_073529_0_1_6"/>
<dbReference type="Proteomes" id="UP000002516">
    <property type="component" value="Chromosome"/>
</dbReference>
<dbReference type="GO" id="GO:0046872">
    <property type="term" value="F:metal ion binding"/>
    <property type="evidence" value="ECO:0007669"/>
    <property type="project" value="UniProtKB-KW"/>
</dbReference>
<dbReference type="GO" id="GO:0008237">
    <property type="term" value="F:metallopeptidase activity"/>
    <property type="evidence" value="ECO:0007669"/>
    <property type="project" value="UniProtKB-KW"/>
</dbReference>
<dbReference type="GO" id="GO:0006508">
    <property type="term" value="P:proteolysis"/>
    <property type="evidence" value="ECO:0007669"/>
    <property type="project" value="UniProtKB-KW"/>
</dbReference>
<dbReference type="CDD" id="cd08071">
    <property type="entry name" value="MPN_DUF2466"/>
    <property type="match status" value="1"/>
</dbReference>
<dbReference type="Gene3D" id="3.40.140.10">
    <property type="entry name" value="Cytidine Deaminase, domain 2"/>
    <property type="match status" value="1"/>
</dbReference>
<dbReference type="InterPro" id="IPR037518">
    <property type="entry name" value="MPN"/>
</dbReference>
<dbReference type="InterPro" id="IPR025657">
    <property type="entry name" value="RadC_JAB"/>
</dbReference>
<dbReference type="InterPro" id="IPR010994">
    <property type="entry name" value="RuvA_2-like"/>
</dbReference>
<dbReference type="InterPro" id="IPR001405">
    <property type="entry name" value="UPF0758"/>
</dbReference>
<dbReference type="InterPro" id="IPR020891">
    <property type="entry name" value="UPF0758_CS"/>
</dbReference>
<dbReference type="InterPro" id="IPR046778">
    <property type="entry name" value="UPF0758_N"/>
</dbReference>
<dbReference type="NCBIfam" id="NF000642">
    <property type="entry name" value="PRK00024.1"/>
    <property type="match status" value="1"/>
</dbReference>
<dbReference type="NCBIfam" id="TIGR00608">
    <property type="entry name" value="radc"/>
    <property type="match status" value="1"/>
</dbReference>
<dbReference type="PANTHER" id="PTHR30471">
    <property type="entry name" value="DNA REPAIR PROTEIN RADC"/>
    <property type="match status" value="1"/>
</dbReference>
<dbReference type="PANTHER" id="PTHR30471:SF3">
    <property type="entry name" value="UPF0758 PROTEIN YEES-RELATED"/>
    <property type="match status" value="1"/>
</dbReference>
<dbReference type="Pfam" id="PF04002">
    <property type="entry name" value="RadC"/>
    <property type="match status" value="1"/>
</dbReference>
<dbReference type="Pfam" id="PF20582">
    <property type="entry name" value="UPF0758_N"/>
    <property type="match status" value="1"/>
</dbReference>
<dbReference type="SUPFAM" id="SSF47781">
    <property type="entry name" value="RuvA domain 2-like"/>
    <property type="match status" value="1"/>
</dbReference>
<dbReference type="PROSITE" id="PS50249">
    <property type="entry name" value="MPN"/>
    <property type="match status" value="1"/>
</dbReference>
<dbReference type="PROSITE" id="PS01302">
    <property type="entry name" value="UPF0758"/>
    <property type="match status" value="1"/>
</dbReference>
<evidence type="ECO:0000255" key="1">
    <source>
        <dbReference type="PROSITE-ProRule" id="PRU01182"/>
    </source>
</evidence>
<evidence type="ECO:0000305" key="2"/>
<gene>
    <name type="ordered locus">PD_0117</name>
</gene>
<feature type="chain" id="PRO_0000190757" description="UPF0758 protein PD_0117">
    <location>
        <begin position="1"/>
        <end position="224"/>
    </location>
</feature>
<feature type="domain" description="MPN" evidence="1">
    <location>
        <begin position="102"/>
        <end position="224"/>
    </location>
</feature>
<feature type="short sequence motif" description="JAMM motif" evidence="1">
    <location>
        <begin position="173"/>
        <end position="186"/>
    </location>
</feature>
<feature type="binding site" evidence="1">
    <location>
        <position position="173"/>
    </location>
    <ligand>
        <name>Zn(2+)</name>
        <dbReference type="ChEBI" id="CHEBI:29105"/>
        <note>catalytic</note>
    </ligand>
</feature>
<feature type="binding site" evidence="1">
    <location>
        <position position="175"/>
    </location>
    <ligand>
        <name>Zn(2+)</name>
        <dbReference type="ChEBI" id="CHEBI:29105"/>
        <note>catalytic</note>
    </ligand>
</feature>
<feature type="binding site" evidence="1">
    <location>
        <position position="186"/>
    </location>
    <ligand>
        <name>Zn(2+)</name>
        <dbReference type="ChEBI" id="CHEBI:29105"/>
        <note>catalytic</note>
    </ligand>
</feature>
<name>Y117_XYLFT</name>
<organism>
    <name type="scientific">Xylella fastidiosa (strain Temecula1 / ATCC 700964)</name>
    <dbReference type="NCBI Taxonomy" id="183190"/>
    <lineage>
        <taxon>Bacteria</taxon>
        <taxon>Pseudomonadati</taxon>
        <taxon>Pseudomonadota</taxon>
        <taxon>Gammaproteobacteria</taxon>
        <taxon>Lysobacterales</taxon>
        <taxon>Lysobacteraceae</taxon>
        <taxon>Xylella</taxon>
    </lineage>
</organism>
<comment type="similarity">
    <text evidence="2">Belongs to the UPF0758 family.</text>
</comment>
<proteinExistence type="inferred from homology"/>